<dbReference type="EC" id="2.4.99.28" evidence="1"/>
<dbReference type="EMBL" id="CP000468">
    <property type="protein sequence ID" value="ABJ02699.1"/>
    <property type="molecule type" value="Genomic_DNA"/>
</dbReference>
<dbReference type="RefSeq" id="WP_000047069.1">
    <property type="nucleotide sequence ID" value="NZ_CADILS010000003.1"/>
</dbReference>
<dbReference type="SMR" id="A1AGA9"/>
<dbReference type="CAZy" id="GT51">
    <property type="family name" value="Glycosyltransferase Family 51"/>
</dbReference>
<dbReference type="KEGG" id="ecv:APECO1_3227"/>
<dbReference type="HOGENOM" id="CLU_006354_1_1_6"/>
<dbReference type="UniPathway" id="UPA00219"/>
<dbReference type="Proteomes" id="UP000008216">
    <property type="component" value="Chromosome"/>
</dbReference>
<dbReference type="GO" id="GO:0009274">
    <property type="term" value="C:peptidoglycan-based cell wall"/>
    <property type="evidence" value="ECO:0007669"/>
    <property type="project" value="InterPro"/>
</dbReference>
<dbReference type="GO" id="GO:0005886">
    <property type="term" value="C:plasma membrane"/>
    <property type="evidence" value="ECO:0007669"/>
    <property type="project" value="UniProtKB-SubCell"/>
</dbReference>
<dbReference type="GO" id="GO:0016763">
    <property type="term" value="F:pentosyltransferase activity"/>
    <property type="evidence" value="ECO:0007669"/>
    <property type="project" value="InterPro"/>
</dbReference>
<dbReference type="GO" id="GO:0008955">
    <property type="term" value="F:peptidoglycan glycosyltransferase activity"/>
    <property type="evidence" value="ECO:0007669"/>
    <property type="project" value="UniProtKB-UniRule"/>
</dbReference>
<dbReference type="GO" id="GO:0071555">
    <property type="term" value="P:cell wall organization"/>
    <property type="evidence" value="ECO:0007669"/>
    <property type="project" value="UniProtKB-KW"/>
</dbReference>
<dbReference type="GO" id="GO:0009252">
    <property type="term" value="P:peptidoglycan biosynthetic process"/>
    <property type="evidence" value="ECO:0007669"/>
    <property type="project" value="UniProtKB-UniRule"/>
</dbReference>
<dbReference type="GO" id="GO:0008360">
    <property type="term" value="P:regulation of cell shape"/>
    <property type="evidence" value="ECO:0007669"/>
    <property type="project" value="UniProtKB-KW"/>
</dbReference>
<dbReference type="FunFam" id="1.10.3810.10:FF:000004">
    <property type="entry name" value="Biosynthetic peptidoglycan transglycosylase"/>
    <property type="match status" value="1"/>
</dbReference>
<dbReference type="Gene3D" id="1.10.3810.10">
    <property type="entry name" value="Biosynthetic peptidoglycan transglycosylase-like"/>
    <property type="match status" value="1"/>
</dbReference>
<dbReference type="HAMAP" id="MF_00766">
    <property type="entry name" value="PGT_MtgA"/>
    <property type="match status" value="1"/>
</dbReference>
<dbReference type="InterPro" id="IPR001264">
    <property type="entry name" value="Glyco_trans_51"/>
</dbReference>
<dbReference type="InterPro" id="IPR023346">
    <property type="entry name" value="Lysozyme-like_dom_sf"/>
</dbReference>
<dbReference type="InterPro" id="IPR036950">
    <property type="entry name" value="PBP_transglycosylase"/>
</dbReference>
<dbReference type="InterPro" id="IPR011812">
    <property type="entry name" value="Pep_trsgly"/>
</dbReference>
<dbReference type="NCBIfam" id="TIGR02070">
    <property type="entry name" value="mono_pep_trsgly"/>
    <property type="match status" value="1"/>
</dbReference>
<dbReference type="PANTHER" id="PTHR30400:SF0">
    <property type="entry name" value="BIOSYNTHETIC PEPTIDOGLYCAN TRANSGLYCOSYLASE"/>
    <property type="match status" value="1"/>
</dbReference>
<dbReference type="PANTHER" id="PTHR30400">
    <property type="entry name" value="MONOFUNCTIONAL BIOSYNTHETIC PEPTIDOGLYCAN TRANSGLYCOSYLASE"/>
    <property type="match status" value="1"/>
</dbReference>
<dbReference type="Pfam" id="PF00912">
    <property type="entry name" value="Transgly"/>
    <property type="match status" value="1"/>
</dbReference>
<dbReference type="SUPFAM" id="SSF53955">
    <property type="entry name" value="Lysozyme-like"/>
    <property type="match status" value="1"/>
</dbReference>
<evidence type="ECO:0000255" key="1">
    <source>
        <dbReference type="HAMAP-Rule" id="MF_00766"/>
    </source>
</evidence>
<accession>A1AGA9</accession>
<feature type="chain" id="PRO_1000017304" description="Biosynthetic peptidoglycan transglycosylase">
    <location>
        <begin position="1"/>
        <end position="242"/>
    </location>
</feature>
<feature type="transmembrane region" description="Helical" evidence="1">
    <location>
        <begin position="19"/>
        <end position="39"/>
    </location>
</feature>
<sequence>MSKSRLTVFSFVRRFLLRLMVVLAIFWGGGIALFSVAPVPFSAVMVERQVSAWLHGNFRYVAHSDWVSMDQISPWMGLAVIAAEDQKFPEHWGFDVASIEQALAHNERNENRIRGASTISQQTAKNLFLWDGRSWVRKGLEAGLTLGIETVWSKKRILTVYLNIAEFGDGVFGVEAAAQRYFHKPASKLTRSEAALLAAVLPNPLRFKVSAPSGYVRSRQAWILRQMYQLGGEPFMQQHQLD</sequence>
<name>MTGA_ECOK1</name>
<proteinExistence type="inferred from homology"/>
<comment type="function">
    <text evidence="1">Peptidoglycan polymerase that catalyzes glycan chain elongation from lipid-linked precursors.</text>
</comment>
<comment type="catalytic activity">
    <reaction evidence="1">
        <text>[GlcNAc-(1-&gt;4)-Mur2Ac(oyl-L-Ala-gamma-D-Glu-L-Lys-D-Ala-D-Ala)](n)-di-trans,octa-cis-undecaprenyl diphosphate + beta-D-GlcNAc-(1-&gt;4)-Mur2Ac(oyl-L-Ala-gamma-D-Glu-L-Lys-D-Ala-D-Ala)-di-trans,octa-cis-undecaprenyl diphosphate = [GlcNAc-(1-&gt;4)-Mur2Ac(oyl-L-Ala-gamma-D-Glu-L-Lys-D-Ala-D-Ala)](n+1)-di-trans,octa-cis-undecaprenyl diphosphate + di-trans,octa-cis-undecaprenyl diphosphate + H(+)</text>
        <dbReference type="Rhea" id="RHEA:23708"/>
        <dbReference type="Rhea" id="RHEA-COMP:9602"/>
        <dbReference type="Rhea" id="RHEA-COMP:9603"/>
        <dbReference type="ChEBI" id="CHEBI:15378"/>
        <dbReference type="ChEBI" id="CHEBI:58405"/>
        <dbReference type="ChEBI" id="CHEBI:60033"/>
        <dbReference type="ChEBI" id="CHEBI:78435"/>
        <dbReference type="EC" id="2.4.99.28"/>
    </reaction>
</comment>
<comment type="pathway">
    <text evidence="1">Cell wall biogenesis; peptidoglycan biosynthesis.</text>
</comment>
<comment type="subcellular location">
    <subcellularLocation>
        <location evidence="1">Cell inner membrane</location>
        <topology evidence="1">Single-pass membrane protein</topology>
    </subcellularLocation>
</comment>
<comment type="similarity">
    <text evidence="1">Belongs to the glycosyltransferase 51 family.</text>
</comment>
<organism>
    <name type="scientific">Escherichia coli O1:K1 / APEC</name>
    <dbReference type="NCBI Taxonomy" id="405955"/>
    <lineage>
        <taxon>Bacteria</taxon>
        <taxon>Pseudomonadati</taxon>
        <taxon>Pseudomonadota</taxon>
        <taxon>Gammaproteobacteria</taxon>
        <taxon>Enterobacterales</taxon>
        <taxon>Enterobacteriaceae</taxon>
        <taxon>Escherichia</taxon>
    </lineage>
</organism>
<reference key="1">
    <citation type="journal article" date="2007" name="J. Bacteriol.">
        <title>The genome sequence of avian pathogenic Escherichia coli strain O1:K1:H7 shares strong similarities with human extraintestinal pathogenic E. coli genomes.</title>
        <authorList>
            <person name="Johnson T.J."/>
            <person name="Kariyawasam S."/>
            <person name="Wannemuehler Y."/>
            <person name="Mangiamele P."/>
            <person name="Johnson S.J."/>
            <person name="Doetkott C."/>
            <person name="Skyberg J.A."/>
            <person name="Lynne A.M."/>
            <person name="Johnson J.R."/>
            <person name="Nolan L.K."/>
        </authorList>
    </citation>
    <scope>NUCLEOTIDE SEQUENCE [LARGE SCALE GENOMIC DNA]</scope>
</reference>
<protein>
    <recommendedName>
        <fullName evidence="1">Biosynthetic peptidoglycan transglycosylase</fullName>
        <ecNumber evidence="1">2.4.99.28</ecNumber>
    </recommendedName>
    <alternativeName>
        <fullName evidence="1">Glycan polymerase</fullName>
    </alternativeName>
    <alternativeName>
        <fullName evidence="1">Peptidoglycan glycosyltransferase MtgA</fullName>
        <shortName evidence="1">PGT</shortName>
    </alternativeName>
</protein>
<keyword id="KW-0997">Cell inner membrane</keyword>
<keyword id="KW-1003">Cell membrane</keyword>
<keyword id="KW-0133">Cell shape</keyword>
<keyword id="KW-0961">Cell wall biogenesis/degradation</keyword>
<keyword id="KW-0328">Glycosyltransferase</keyword>
<keyword id="KW-0472">Membrane</keyword>
<keyword id="KW-0573">Peptidoglycan synthesis</keyword>
<keyword id="KW-1185">Reference proteome</keyword>
<keyword id="KW-0808">Transferase</keyword>
<keyword id="KW-0812">Transmembrane</keyword>
<keyword id="KW-1133">Transmembrane helix</keyword>
<gene>
    <name evidence="1" type="primary">mtgA</name>
    <name type="ordered locus">Ecok1_32050</name>
    <name type="ORF">APECO1_3227</name>
</gene>